<comment type="function">
    <text evidence="1">Component of the Mediator complex, a coactivator involved in the regulated transcription of nearly all RNA polymerase II-dependent genes. Mediator functions as a bridge to convey information from gene-specific regulatory proteins to the basal RNA polymerase II transcription machinery. Mediator is recruited to promoters by direct interactions with regulatory proteins and serves as a scaffold for the assembly of a functional preinitiation complex with RNA polymerase II and the general transcription factors (By similarity).</text>
</comment>
<comment type="subunit">
    <text evidence="1">Component of the Mediator complex.</text>
</comment>
<comment type="subcellular location">
    <subcellularLocation>
        <location evidence="3">Nucleus</location>
    </subcellularLocation>
</comment>
<comment type="similarity">
    <text evidence="3">Belongs to the Mediator complex subunit 23 family.</text>
</comment>
<accession>Q60UZ5</accession>
<accession>A8XWD7</accession>
<name>MED23_CAEBR</name>
<reference key="1">
    <citation type="journal article" date="2003" name="PLoS Biol.">
        <title>The genome sequence of Caenorhabditis briggsae: a platform for comparative genomics.</title>
        <authorList>
            <person name="Stein L.D."/>
            <person name="Bao Z."/>
            <person name="Blasiar D."/>
            <person name="Blumenthal T."/>
            <person name="Brent M.R."/>
            <person name="Chen N."/>
            <person name="Chinwalla A."/>
            <person name="Clarke L."/>
            <person name="Clee C."/>
            <person name="Coghlan A."/>
            <person name="Coulson A."/>
            <person name="D'Eustachio P."/>
            <person name="Fitch D.H.A."/>
            <person name="Fulton L.A."/>
            <person name="Fulton R.E."/>
            <person name="Griffiths-Jones S."/>
            <person name="Harris T.W."/>
            <person name="Hillier L.W."/>
            <person name="Kamath R."/>
            <person name="Kuwabara P.E."/>
            <person name="Mardis E.R."/>
            <person name="Marra M.A."/>
            <person name="Miner T.L."/>
            <person name="Minx P."/>
            <person name="Mullikin J.C."/>
            <person name="Plumb R.W."/>
            <person name="Rogers J."/>
            <person name="Schein J.E."/>
            <person name="Sohrmann M."/>
            <person name="Spieth J."/>
            <person name="Stajich J.E."/>
            <person name="Wei C."/>
            <person name="Willey D."/>
            <person name="Wilson R.K."/>
            <person name="Durbin R.M."/>
            <person name="Waterston R.H."/>
        </authorList>
    </citation>
    <scope>NUCLEOTIDE SEQUENCE [LARGE SCALE GENOMIC DNA]</scope>
    <source>
        <strain>AF16</strain>
    </source>
</reference>
<evidence type="ECO:0000250" key="1"/>
<evidence type="ECO:0000256" key="2">
    <source>
        <dbReference type="SAM" id="MobiDB-lite"/>
    </source>
</evidence>
<evidence type="ECO:0000305" key="3"/>
<protein>
    <recommendedName>
        <fullName>Mediator of RNA polymerase II transcription subunit 23</fullName>
    </recommendedName>
    <alternativeName>
        <fullName>Mediator complex subunit 23</fullName>
    </alternativeName>
    <alternativeName>
        <fullName>Mediator complex subunit sur-2</fullName>
    </alternativeName>
</protein>
<organism>
    <name type="scientific">Caenorhabditis briggsae</name>
    <dbReference type="NCBI Taxonomy" id="6238"/>
    <lineage>
        <taxon>Eukaryota</taxon>
        <taxon>Metazoa</taxon>
        <taxon>Ecdysozoa</taxon>
        <taxon>Nematoda</taxon>
        <taxon>Chromadorea</taxon>
        <taxon>Rhabditida</taxon>
        <taxon>Rhabditina</taxon>
        <taxon>Rhabditomorpha</taxon>
        <taxon>Rhabditoidea</taxon>
        <taxon>Rhabditidae</taxon>
        <taxon>Peloderinae</taxon>
        <taxon>Caenorhabditis</taxon>
    </lineage>
</organism>
<gene>
    <name type="primary">sur-2</name>
    <name type="synonym">mdt-23</name>
    <name type="ORF">CBG19759</name>
</gene>
<keyword id="KW-0010">Activator</keyword>
<keyword id="KW-0539">Nucleus</keyword>
<keyword id="KW-1185">Reference proteome</keyword>
<keyword id="KW-0804">Transcription</keyword>
<keyword id="KW-0805">Transcription regulation</keyword>
<dbReference type="EMBL" id="HE601474">
    <property type="protein sequence ID" value="CAP36956.2"/>
    <property type="molecule type" value="Genomic_DNA"/>
</dbReference>
<dbReference type="SMR" id="Q60UZ5"/>
<dbReference type="FunCoup" id="Q60UZ5">
    <property type="interactions" value="2627"/>
</dbReference>
<dbReference type="STRING" id="6238.Q60UZ5"/>
<dbReference type="WormBase" id="CBG19759">
    <property type="protein sequence ID" value="CBP39058"/>
    <property type="gene ID" value="WBGene00038926"/>
    <property type="gene designation" value="Cbr-sur-2"/>
</dbReference>
<dbReference type="eggNOG" id="KOG1883">
    <property type="taxonomic scope" value="Eukaryota"/>
</dbReference>
<dbReference type="HOGENOM" id="CLU_244777_0_0_1"/>
<dbReference type="InParanoid" id="Q60UZ5"/>
<dbReference type="OMA" id="MMSKMEE"/>
<dbReference type="Proteomes" id="UP000008549">
    <property type="component" value="Unassembled WGS sequence"/>
</dbReference>
<dbReference type="GO" id="GO:0016592">
    <property type="term" value="C:mediator complex"/>
    <property type="evidence" value="ECO:0000318"/>
    <property type="project" value="GO_Central"/>
</dbReference>
<dbReference type="GO" id="GO:0005667">
    <property type="term" value="C:transcription regulator complex"/>
    <property type="evidence" value="ECO:0000318"/>
    <property type="project" value="GO_Central"/>
</dbReference>
<dbReference type="GO" id="GO:0010628">
    <property type="term" value="P:positive regulation of gene expression"/>
    <property type="evidence" value="ECO:0000318"/>
    <property type="project" value="GO_Central"/>
</dbReference>
<dbReference type="GO" id="GO:0006357">
    <property type="term" value="P:regulation of transcription by RNA polymerase II"/>
    <property type="evidence" value="ECO:0000318"/>
    <property type="project" value="GO_Central"/>
</dbReference>
<dbReference type="InterPro" id="IPR021629">
    <property type="entry name" value="Mediator_Med23"/>
</dbReference>
<dbReference type="PANTHER" id="PTHR12691">
    <property type="entry name" value="MEDIATOR OF RNA POLYMERASE II TRANSCRIPTION SUBUNIT 23"/>
    <property type="match status" value="1"/>
</dbReference>
<dbReference type="PANTHER" id="PTHR12691:SF10">
    <property type="entry name" value="MEDIATOR OF RNA POLYMERASE II TRANSCRIPTION SUBUNIT 23"/>
    <property type="match status" value="1"/>
</dbReference>
<dbReference type="Pfam" id="PF11573">
    <property type="entry name" value="Med23"/>
    <property type="match status" value="1"/>
</dbReference>
<proteinExistence type="inferred from homology"/>
<sequence>MTEKDKAPNPEDVIEMDDSFSPQFVQEVNRVKSQIKSLIENNTTLRFFKPLTSNLGDVTAILRISFNNMMSKMEEKEKQSLVKELIKLVHHVAEKNTQDKVFIAASYERVVDELLRYANQKEVISTTLCVEGLIMTSDFRMCSRIDQEKWKFIKECIPKIDYKGIRTIIRYILESQLRRLPYQLSPEKVNELRRVEDVLLKIVDRDLNLMPPLITLSEVMRGTPKQAHMFPRLTEKLANLSSHFRPIADLTHVCGRPFIYPIPFHPAFHPPTSYWEDFGMNAQSPYTQSHHMLPYRPQHKAASCLYTFYMILRQPLGKDSLNPTNRNKTKSHWEPLLSVMIVEAMAETEALPEGKQIPRYQWDNITNLVMYGMSHLLVNPKNFFHYLKGLINQCKYTRARDEVMWIVFQVVSSLHKMIKIEDAVQEIVDLYNELFDGEFSWHGASDHPARMARFLAAASTWMLLEKNKAHKQNTDTIKSHIKVIHEAALNFDPKNMGMLAVLANAFKSDTRIGAQIVPAMSEALNTPPDPSQPTFDLSYQRKAVNQFDAFPKEFLDALTSRAKRSLLGQILSVFRSFGTDKLPSPAAFETLARICQSEDYEMAVKDLESLASRSLHISTQERAADIATNNQAKDQCHFLFDFLAYRLPHVHSYGKYTSTTGSLLLYFTASVAPNTPQNHQVYRLLEQALLRRMYWRTFHESVINHSQLFGSSYKENSNNVMLRHLKNPKTFSTPVDQWQFPLNPEIFKMTIYAFMRALKITGQEIPLDGTMHPIHVAGYGWPEKSTTFFPKWALEEIKKTDVKKLAPNYAEILSTTDEAFRMNTLLTGGQYVIRYADDPNPITYHCMLAVIFKQLCSKPEQDLTSEYYQVMEKKSPKDIVVMGNYLVDFIIADVKNNQDCNEQTFKTIAKTAALMCFHFNIHRADRFLLSLIMHPSTDEDAQICIQIANEFLLTPKFQERIKWFYENDVPRKEKDPYEYIKAIVKYHDAFPEFEACQLVPKNDDTGTNVHMPTYYGCLIERLLPILDQYVYVALEQQGYKMSNALLQLVSMFYRYHPMPIHFMYSVLFVSHGKMAGPDAKSFVSAFASQIEECHLTEEFEKYNHQKSSCEELIMELLDRMAASLDFVLTPPTFVAKDWRTAEMSPGAQALYLACIELMASPHSPEKLVNAMINVMQMRPHLRPFNVFNLIALLLTALPSTYADALHEEFIGVFKNGETANLKFEEIVFDNYDSSLLLHLPNRARSINMIAQIYWTQCNMALLNPFANDQVPKLLEHVKTEKDLWYTLRLVMPIIRRFWDSWDFAKTMRALRERFGPLVIMKLIIEKLGSMAESGVEIVHEAPFCDLFYNCKYVFVGDFLRETAITEFAKLPEAMRERLKYYVSQNEPAPPETPEREKTPERKDQQKEQQEQQHQQHHQNPQLHHEAQHHPHHPHQQPSMPPPQLIPQHHLQHHQQQLHHQQQQQQHLSQMMPPPQQPLQHLPHHQMDMAPPTPAPMHHQQHQMAMHQQMYPGQMFHHPQGGHMGYGMQHHMQQPHPHHPQMQGQMPSQMQHMVRMHNMTPQQQQQYAYMMQQQQHHYMQQQQHQQHHHM</sequence>
<feature type="chain" id="PRO_0000305935" description="Mediator of RNA polymerase II transcription subunit 23">
    <location>
        <begin position="1"/>
        <end position="1589"/>
    </location>
</feature>
<feature type="region of interest" description="Disordered" evidence="2">
    <location>
        <begin position="1381"/>
        <end position="1499"/>
    </location>
</feature>
<feature type="compositionally biased region" description="Basic and acidic residues" evidence="2">
    <location>
        <begin position="1392"/>
        <end position="1410"/>
    </location>
</feature>
<feature type="compositionally biased region" description="Low complexity" evidence="2">
    <location>
        <begin position="1457"/>
        <end position="1470"/>
    </location>
</feature>